<dbReference type="EC" id="2.7.7.6" evidence="1"/>
<dbReference type="EMBL" id="CP000259">
    <property type="protein sequence ID" value="ABF31271.1"/>
    <property type="status" value="ALT_FRAME"/>
    <property type="molecule type" value="Genomic_DNA"/>
</dbReference>
<dbReference type="SMR" id="Q1JNX8"/>
<dbReference type="KEGG" id="spk:MGAS9429_Spy0083"/>
<dbReference type="HOGENOM" id="CLU_000524_4_1_9"/>
<dbReference type="Proteomes" id="UP000002433">
    <property type="component" value="Chromosome"/>
</dbReference>
<dbReference type="GO" id="GO:0000428">
    <property type="term" value="C:DNA-directed RNA polymerase complex"/>
    <property type="evidence" value="ECO:0007669"/>
    <property type="project" value="UniProtKB-KW"/>
</dbReference>
<dbReference type="GO" id="GO:0003677">
    <property type="term" value="F:DNA binding"/>
    <property type="evidence" value="ECO:0007669"/>
    <property type="project" value="UniProtKB-UniRule"/>
</dbReference>
<dbReference type="GO" id="GO:0003899">
    <property type="term" value="F:DNA-directed RNA polymerase activity"/>
    <property type="evidence" value="ECO:0007669"/>
    <property type="project" value="UniProtKB-UniRule"/>
</dbReference>
<dbReference type="GO" id="GO:0032549">
    <property type="term" value="F:ribonucleoside binding"/>
    <property type="evidence" value="ECO:0007669"/>
    <property type="project" value="InterPro"/>
</dbReference>
<dbReference type="GO" id="GO:0006351">
    <property type="term" value="P:DNA-templated transcription"/>
    <property type="evidence" value="ECO:0007669"/>
    <property type="project" value="UniProtKB-UniRule"/>
</dbReference>
<dbReference type="CDD" id="cd00653">
    <property type="entry name" value="RNA_pol_B_RPB2"/>
    <property type="match status" value="1"/>
</dbReference>
<dbReference type="Gene3D" id="2.40.50.100">
    <property type="match status" value="1"/>
</dbReference>
<dbReference type="Gene3D" id="2.40.50.150">
    <property type="match status" value="1"/>
</dbReference>
<dbReference type="Gene3D" id="3.90.1100.10">
    <property type="match status" value="2"/>
</dbReference>
<dbReference type="Gene3D" id="2.30.150.10">
    <property type="entry name" value="DNA-directed RNA polymerase, beta subunit, external 1 domain"/>
    <property type="match status" value="1"/>
</dbReference>
<dbReference type="Gene3D" id="2.40.270.10">
    <property type="entry name" value="DNA-directed RNA polymerase, subunit 2, domain 6"/>
    <property type="match status" value="2"/>
</dbReference>
<dbReference type="Gene3D" id="3.90.1800.10">
    <property type="entry name" value="RNA polymerase alpha subunit dimerisation domain"/>
    <property type="match status" value="1"/>
</dbReference>
<dbReference type="Gene3D" id="3.90.1110.10">
    <property type="entry name" value="RNA polymerase Rpb2, domain 2"/>
    <property type="match status" value="1"/>
</dbReference>
<dbReference type="HAMAP" id="MF_01321">
    <property type="entry name" value="RNApol_bact_RpoB"/>
    <property type="match status" value="1"/>
</dbReference>
<dbReference type="InterPro" id="IPR042107">
    <property type="entry name" value="DNA-dir_RNA_pol_bsu_ext_1_sf"/>
</dbReference>
<dbReference type="InterPro" id="IPR019462">
    <property type="entry name" value="DNA-dir_RNA_pol_bsu_external_1"/>
</dbReference>
<dbReference type="InterPro" id="IPR015712">
    <property type="entry name" value="DNA-dir_RNA_pol_su2"/>
</dbReference>
<dbReference type="InterPro" id="IPR007120">
    <property type="entry name" value="DNA-dir_RNAP_su2_dom"/>
</dbReference>
<dbReference type="InterPro" id="IPR037033">
    <property type="entry name" value="DNA-dir_RNAP_su2_hyb_sf"/>
</dbReference>
<dbReference type="InterPro" id="IPR010243">
    <property type="entry name" value="RNA_pol_bsu_bac"/>
</dbReference>
<dbReference type="InterPro" id="IPR007121">
    <property type="entry name" value="RNA_pol_bsu_CS"/>
</dbReference>
<dbReference type="InterPro" id="IPR007644">
    <property type="entry name" value="RNA_pol_bsu_protrusion"/>
</dbReference>
<dbReference type="InterPro" id="IPR007642">
    <property type="entry name" value="RNA_pol_Rpb2_2"/>
</dbReference>
<dbReference type="InterPro" id="IPR037034">
    <property type="entry name" value="RNA_pol_Rpb2_2_sf"/>
</dbReference>
<dbReference type="InterPro" id="IPR007645">
    <property type="entry name" value="RNA_pol_Rpb2_3"/>
</dbReference>
<dbReference type="InterPro" id="IPR007641">
    <property type="entry name" value="RNA_pol_Rpb2_7"/>
</dbReference>
<dbReference type="InterPro" id="IPR014724">
    <property type="entry name" value="RNA_pol_RPB2_OB-fold"/>
</dbReference>
<dbReference type="NCBIfam" id="NF001616">
    <property type="entry name" value="PRK00405.1"/>
    <property type="match status" value="1"/>
</dbReference>
<dbReference type="NCBIfam" id="TIGR02013">
    <property type="entry name" value="rpoB"/>
    <property type="match status" value="1"/>
</dbReference>
<dbReference type="PANTHER" id="PTHR20856">
    <property type="entry name" value="DNA-DIRECTED RNA POLYMERASE I SUBUNIT 2"/>
    <property type="match status" value="1"/>
</dbReference>
<dbReference type="Pfam" id="PF04563">
    <property type="entry name" value="RNA_pol_Rpb2_1"/>
    <property type="match status" value="1"/>
</dbReference>
<dbReference type="Pfam" id="PF04561">
    <property type="entry name" value="RNA_pol_Rpb2_2"/>
    <property type="match status" value="2"/>
</dbReference>
<dbReference type="Pfam" id="PF04565">
    <property type="entry name" value="RNA_pol_Rpb2_3"/>
    <property type="match status" value="1"/>
</dbReference>
<dbReference type="Pfam" id="PF10385">
    <property type="entry name" value="RNA_pol_Rpb2_45"/>
    <property type="match status" value="1"/>
</dbReference>
<dbReference type="Pfam" id="PF00562">
    <property type="entry name" value="RNA_pol_Rpb2_6"/>
    <property type="match status" value="2"/>
</dbReference>
<dbReference type="Pfam" id="PF04560">
    <property type="entry name" value="RNA_pol_Rpb2_7"/>
    <property type="match status" value="1"/>
</dbReference>
<dbReference type="SUPFAM" id="SSF64484">
    <property type="entry name" value="beta and beta-prime subunits of DNA dependent RNA-polymerase"/>
    <property type="match status" value="1"/>
</dbReference>
<dbReference type="PROSITE" id="PS01166">
    <property type="entry name" value="RNA_POL_BETA"/>
    <property type="match status" value="1"/>
</dbReference>
<feature type="chain" id="PRO_0000300410" description="DNA-directed RNA polymerase subunit beta">
    <location>
        <begin position="1"/>
        <end position="1197"/>
    </location>
</feature>
<evidence type="ECO:0000255" key="1">
    <source>
        <dbReference type="HAMAP-Rule" id="MF_01321"/>
    </source>
</evidence>
<evidence type="ECO:0000305" key="2"/>
<keyword id="KW-0240">DNA-directed RNA polymerase</keyword>
<keyword id="KW-0548">Nucleotidyltransferase</keyword>
<keyword id="KW-0804">Transcription</keyword>
<keyword id="KW-0808">Transferase</keyword>
<accession>Q1JNX8</accession>
<name>RPOB_STRPC</name>
<sequence>MAGHEVRYGKHRTRRSFSRIKEVLDLPNLIEIQTDSFQDFLDSGLKEVFEDVLPISNFTDTMELEFVGYEFKEPKYTLEEARIHDASYSAPIFVTFRLVNKETGEIKTQEVFFGDFPIMTEMGTFIINGGERIIVSQLVRSPGVYFNDKVDKNGKVGYGSTVIPNRGAWLELETDSKDIAYTRIDRTRKIPFTTLVRALGFSGDDEIVDIFGESDLVRNTIEKDIHKNPSDSRTDEALKEIYERLRPGEPKTADSSRSLLIARFFDARRYDLAAVGRYKVNKKLNIKTRLLNQIIAENLVDAETGEILVEAGTEMTRSVIESIEEHLDGDLNKFVYTPNDYAVVTEPVVLQKFKVVSPIDPDRVVTIVGNANPDDKVRALTPADILAEMSYFLNLAEGLGKVDDIDHLGNRRIRAVGELLANQFRIGLARMERNVRERMSVQDNDVLTPQQIINIRPVTAAVKEFFGSSQLSQFMDQHNPLSELSHKRRLSALGPGGLTRDRAGYEVRDVHYTHYGRMCPIETPEGPNIGLINNLSSFGHLNKYGFIQTPYRKVDRATGRVTNEIVWLTADEEDEYTVAQANSKLNEDGTFAEEIVMGRHQGNNQEFSASVVDFVDVSPKQVVAVATACIPFLENDDSNRALMGANMQRQAVPLIDPKAPYVGTGMEYQAAHDSGAAVIAQHNGKVVFSDAEKVEIRRQDGSLDVYHITKFRRSNSGTAYNQRTLVKVGDIVEKGDFIADGPSMENGEMALGQNPVVAYMTWEGYNFEDAVIMSERLVKEDVYTSVHLEEFESETRDTKLGPEEITREIPNVGEEALKDLDEMGIIRIGAEVKEGDILVGKVTPKGEKDLSAEERLLHAIFGDKSREVRDTSLRVPHGGDGIVRDVKIFTRANGDELQSGVNMLVRVYIAQKRKIKVGDKMAGRHGNKGVVSRIVPKGVVSRIVPVEDMPYLPDGTPVDIMLNPLGVPSRMNIGQVMELHLGMAARNLGIHIATPVFDGASSEDLWDTVREAGMDSDAKTVLYDGRTGEPFDNRVSVGVMYMIKLHHMVDDKLHARSVGPYSLVTQQPLGGKAQFGGQRFGEMEVWALEAYGASNVLQEILTYKSDDVTGRLKAYEAITKGKPIPKPGVPESFRVLVKELQSLGLDMRVLDEDDNEVELRDLDEGEDDDIMHVDDLEKAREKQAQETQEVSETTDEK</sequence>
<proteinExistence type="inferred from homology"/>
<protein>
    <recommendedName>
        <fullName evidence="1">DNA-directed RNA polymerase subunit beta</fullName>
        <shortName evidence="1">RNAP subunit beta</shortName>
        <ecNumber evidence="1">2.7.7.6</ecNumber>
    </recommendedName>
    <alternativeName>
        <fullName evidence="1">RNA polymerase subunit beta</fullName>
    </alternativeName>
    <alternativeName>
        <fullName evidence="1">Transcriptase subunit beta</fullName>
    </alternativeName>
</protein>
<gene>
    <name evidence="1" type="primary">rpoB</name>
    <name type="ordered locus">MGAS9429_Spy0083</name>
</gene>
<comment type="function">
    <text evidence="1">DNA-dependent RNA polymerase catalyzes the transcription of DNA into RNA using the four ribonucleoside triphosphates as substrates.</text>
</comment>
<comment type="catalytic activity">
    <reaction evidence="1">
        <text>RNA(n) + a ribonucleoside 5'-triphosphate = RNA(n+1) + diphosphate</text>
        <dbReference type="Rhea" id="RHEA:21248"/>
        <dbReference type="Rhea" id="RHEA-COMP:14527"/>
        <dbReference type="Rhea" id="RHEA-COMP:17342"/>
        <dbReference type="ChEBI" id="CHEBI:33019"/>
        <dbReference type="ChEBI" id="CHEBI:61557"/>
        <dbReference type="ChEBI" id="CHEBI:140395"/>
        <dbReference type="EC" id="2.7.7.6"/>
    </reaction>
</comment>
<comment type="subunit">
    <text evidence="1">The RNAP catalytic core consists of 2 alpha, 1 beta, 1 beta' and 1 omega subunit. When a sigma factor is associated with the core the holoenzyme is formed, which can initiate transcription.</text>
</comment>
<comment type="similarity">
    <text evidence="1">Belongs to the RNA polymerase beta chain family.</text>
</comment>
<comment type="sequence caution" evidence="2">
    <conflict type="frameshift">
        <sequence resource="EMBL-CDS" id="ABF31271"/>
    </conflict>
</comment>
<reference key="1">
    <citation type="journal article" date="2006" name="Proc. Natl. Acad. Sci. U.S.A.">
        <title>Molecular genetic anatomy of inter- and intraserotype variation in the human bacterial pathogen group A Streptococcus.</title>
        <authorList>
            <person name="Beres S.B."/>
            <person name="Richter E.W."/>
            <person name="Nagiec M.J."/>
            <person name="Sumby P."/>
            <person name="Porcella S.F."/>
            <person name="DeLeo F.R."/>
            <person name="Musser J.M."/>
        </authorList>
    </citation>
    <scope>NUCLEOTIDE SEQUENCE [LARGE SCALE GENOMIC DNA]</scope>
    <source>
        <strain>MGAS9429</strain>
    </source>
</reference>
<organism>
    <name type="scientific">Streptococcus pyogenes serotype M12 (strain MGAS9429)</name>
    <dbReference type="NCBI Taxonomy" id="370551"/>
    <lineage>
        <taxon>Bacteria</taxon>
        <taxon>Bacillati</taxon>
        <taxon>Bacillota</taxon>
        <taxon>Bacilli</taxon>
        <taxon>Lactobacillales</taxon>
        <taxon>Streptococcaceae</taxon>
        <taxon>Streptococcus</taxon>
    </lineage>
</organism>